<organism>
    <name type="scientific">Bos mutus grunniens</name>
    <name type="common">Wild yak</name>
    <name type="synonym">Bos grunniens</name>
    <dbReference type="NCBI Taxonomy" id="30521"/>
    <lineage>
        <taxon>Eukaryota</taxon>
        <taxon>Metazoa</taxon>
        <taxon>Chordata</taxon>
        <taxon>Craniata</taxon>
        <taxon>Vertebrata</taxon>
        <taxon>Euteleostomi</taxon>
        <taxon>Mammalia</taxon>
        <taxon>Eutheria</taxon>
        <taxon>Laurasiatheria</taxon>
        <taxon>Artiodactyla</taxon>
        <taxon>Ruminantia</taxon>
        <taxon>Pecora</taxon>
        <taxon>Bovidae</taxon>
        <taxon>Bovinae</taxon>
        <taxon>Bos</taxon>
    </lineage>
</organism>
<dbReference type="EC" id="2.4.1.102" evidence="2"/>
<dbReference type="EC" id="2.4.1.148" evidence="2"/>
<dbReference type="EC" id="2.4.1.150" evidence="2"/>
<dbReference type="EMBL" id="AF465336">
    <property type="protein sequence ID" value="AAO22163.1"/>
    <property type="molecule type" value="Genomic_DNA"/>
</dbReference>
<dbReference type="SMR" id="Q866Z5"/>
<dbReference type="CAZy" id="GT14">
    <property type="family name" value="Glycosyltransferase Family 14"/>
</dbReference>
<dbReference type="GlyCosmos" id="Q866Z5">
    <property type="glycosylation" value="1 site, No reported glycans"/>
</dbReference>
<dbReference type="Ensembl" id="ENSBGRT00000015812.1">
    <property type="protein sequence ID" value="ENSBGRP00000013705.1"/>
    <property type="gene ID" value="ENSBGRG00000008683.1"/>
</dbReference>
<dbReference type="GeneTree" id="ENSGT00940000159331"/>
<dbReference type="UniPathway" id="UPA00378"/>
<dbReference type="Proteomes" id="UP000694520">
    <property type="component" value="Chromosome 11"/>
</dbReference>
<dbReference type="GO" id="GO:0000139">
    <property type="term" value="C:Golgi membrane"/>
    <property type="evidence" value="ECO:0007669"/>
    <property type="project" value="UniProtKB-SubCell"/>
</dbReference>
<dbReference type="GO" id="GO:0047225">
    <property type="term" value="F:acetylgalactosaminyl-O-glycosyl-glycoprotein beta-1,6-N-acetylglucosaminyltransferase activity"/>
    <property type="evidence" value="ECO:0007669"/>
    <property type="project" value="UniProtKB-EC"/>
</dbReference>
<dbReference type="GO" id="GO:0003829">
    <property type="term" value="F:beta-1,3-galactosyl-O-glycosyl-glycoprotein beta-1,6-N-acetylglucosaminyltransferase activity"/>
    <property type="evidence" value="ECO:0007669"/>
    <property type="project" value="UniProtKB-EC"/>
</dbReference>
<dbReference type="GO" id="GO:0008109">
    <property type="term" value="F:N-acetyllactosaminide beta-1,6-N-acetylglucosaminyltransferase activity"/>
    <property type="evidence" value="ECO:0007669"/>
    <property type="project" value="UniProtKB-EC"/>
</dbReference>
<dbReference type="GO" id="GO:0050892">
    <property type="term" value="P:intestinal absorption"/>
    <property type="evidence" value="ECO:0007669"/>
    <property type="project" value="Ensembl"/>
</dbReference>
<dbReference type="GO" id="GO:0060993">
    <property type="term" value="P:kidney morphogenesis"/>
    <property type="evidence" value="ECO:0007669"/>
    <property type="project" value="Ensembl"/>
</dbReference>
<dbReference type="GO" id="GO:0006486">
    <property type="term" value="P:protein glycosylation"/>
    <property type="evidence" value="ECO:0007669"/>
    <property type="project" value="UniProtKB-UniPathway"/>
</dbReference>
<dbReference type="GO" id="GO:0048729">
    <property type="term" value="P:tissue morphogenesis"/>
    <property type="evidence" value="ECO:0007669"/>
    <property type="project" value="Ensembl"/>
</dbReference>
<dbReference type="InterPro" id="IPR003406">
    <property type="entry name" value="Glyco_trans_14"/>
</dbReference>
<dbReference type="PANTHER" id="PTHR19297:SF81">
    <property type="entry name" value="BETA-1,3-GALACTOSYL-O-GLYCOSYL-GLYCOPROTEIN BETA-1,6-N-ACETYLGLUCOSAMINYLTRANSFERASE 3"/>
    <property type="match status" value="1"/>
</dbReference>
<dbReference type="PANTHER" id="PTHR19297">
    <property type="entry name" value="GLYCOSYLTRANSFERASE 14 FAMILY MEMBER"/>
    <property type="match status" value="1"/>
</dbReference>
<dbReference type="Pfam" id="PF02485">
    <property type="entry name" value="Branch"/>
    <property type="match status" value="1"/>
</dbReference>
<feature type="chain" id="PRO_0000288542" description="Beta-1,3-galactosyl-O-glycosyl-glycoprotein beta-1,6-N-acetylglucosaminyltransferase 3">
    <location>
        <begin position="1"/>
        <end position="440"/>
    </location>
</feature>
<feature type="topological domain" description="Cytoplasmic" evidence="3">
    <location>
        <begin position="1"/>
        <end position="12"/>
    </location>
</feature>
<feature type="transmembrane region" description="Helical; Signal-anchor for type II membrane protein" evidence="3">
    <location>
        <begin position="13"/>
        <end position="30"/>
    </location>
</feature>
<feature type="topological domain" description="Lumenal" evidence="3">
    <location>
        <begin position="31"/>
        <end position="440"/>
    </location>
</feature>
<feature type="glycosylation site" description="N-linked (GlcNAc...) asparagine" evidence="3">
    <location>
        <position position="108"/>
    </location>
</feature>
<feature type="disulfide bond" evidence="1">
    <location>
        <begin position="73"/>
        <end position="230"/>
    </location>
</feature>
<feature type="disulfide bond" evidence="1">
    <location>
        <begin position="164"/>
        <end position="384"/>
    </location>
</feature>
<feature type="disulfide bond" evidence="1">
    <location>
        <begin position="185"/>
        <end position="212"/>
    </location>
</feature>
<feature type="disulfide bond" evidence="1">
    <location>
        <begin position="393"/>
        <end position="425"/>
    </location>
</feature>
<protein>
    <recommendedName>
        <fullName>Beta-1,3-galactosyl-O-glycosyl-glycoprotein beta-1,6-N-acetylglucosaminyltransferase 3</fullName>
        <ecNumber evidence="2">2.4.1.102</ecNumber>
        <ecNumber evidence="2">2.4.1.148</ecNumber>
        <ecNumber evidence="2">2.4.1.150</ecNumber>
    </recommendedName>
    <alternativeName>
        <fullName>C2GnT-mucin type</fullName>
        <shortName>C2GnT-M</shortName>
    </alternativeName>
</protein>
<accession>Q866Z5</accession>
<comment type="function">
    <text evidence="2">Glycosyltransferase that can synthesize all known mucin beta 6 N-acetylglucosaminides. Mediates core 2 and core 4 O-glycan branching, 2 important steps in mucin-type biosynthesis. Also has I-branching enzyme activity by converting linear into branched poly-N-acetyllactosaminoglycans, leading to introduce the blood group I antigen during embryonic development.</text>
</comment>
<comment type="catalytic activity">
    <reaction evidence="2">
        <text>a 3-O-[beta-D-galactosyl-(1-&gt;3)-N-acetyl-alpha-D-galactosaminyl]-L-seryl-[protein] + UDP-N-acetyl-alpha-D-glucosamine = 3-O-{beta-D-galactosyl-(1-&gt;3)-[N-acetyl-beta-D-glucosaminyl-(1-&gt;6)]-N-acetyl-alpha-D-galactosaminyl}-L-seryl-[protein] + UDP + H(+)</text>
        <dbReference type="Rhea" id="RHEA:56212"/>
        <dbReference type="Rhea" id="RHEA-COMP:13922"/>
        <dbReference type="Rhea" id="RHEA-COMP:14419"/>
        <dbReference type="ChEBI" id="CHEBI:15378"/>
        <dbReference type="ChEBI" id="CHEBI:57705"/>
        <dbReference type="ChEBI" id="CHEBI:58223"/>
        <dbReference type="ChEBI" id="CHEBI:137949"/>
        <dbReference type="ChEBI" id="CHEBI:139605"/>
        <dbReference type="EC" id="2.4.1.102"/>
    </reaction>
</comment>
<comment type="catalytic activity">
    <reaction evidence="2">
        <text>a 3-O-[beta-D-galactosyl-(1-&gt;3)-N-acetyl-alpha-D-galactosaminyl]-L-threonyl-[protein] + UDP-N-acetyl-alpha-D-glucosamine = a 3-O-{beta-D-galactosyl-(1-&gt;3)-[N-acetyl-beta-D-glucosaminyl-(1-&gt;6)]-N-acetyl-alpha-D-galactosaminyl}-L-threonyl-[protein] + UDP + H(+)</text>
        <dbReference type="Rhea" id="RHEA:56216"/>
        <dbReference type="Rhea" id="RHEA-COMP:13923"/>
        <dbReference type="Rhea" id="RHEA-COMP:14420"/>
        <dbReference type="ChEBI" id="CHEBI:15378"/>
        <dbReference type="ChEBI" id="CHEBI:57705"/>
        <dbReference type="ChEBI" id="CHEBI:58223"/>
        <dbReference type="ChEBI" id="CHEBI:137950"/>
        <dbReference type="ChEBI" id="CHEBI:139607"/>
        <dbReference type="EC" id="2.4.1.102"/>
    </reaction>
</comment>
<comment type="catalytic activity">
    <reaction evidence="2">
        <text>a beta-D-Gal-(1-&gt;4)-beta-D-GlcNAc-(1-&gt;3)-beta-D-Gal-(1-&gt;4)-beta-D-GlcNAc derivative + UDP-N-acetyl-alpha-D-glucosamine = a beta-D-Gal-(1-&gt;4)-beta-D-GlcNAc-(1-&gt;3)-[beta-D-GlcNAc-(1-&gt;6)]-beta-D-Gal-(1-&gt;4)-N-acetyl-beta-D-glucosaminyl derivative + UDP + H(+)</text>
        <dbReference type="Rhea" id="RHEA:54820"/>
        <dbReference type="ChEBI" id="CHEBI:15378"/>
        <dbReference type="ChEBI" id="CHEBI:57705"/>
        <dbReference type="ChEBI" id="CHEBI:58223"/>
        <dbReference type="ChEBI" id="CHEBI:138371"/>
        <dbReference type="ChEBI" id="CHEBI:138372"/>
        <dbReference type="EC" id="2.4.1.150"/>
    </reaction>
</comment>
<comment type="catalytic activity">
    <reaction evidence="2">
        <text>3-O-[N-acetyl-beta-D-glucosaminyl-(1-&gt;3)-N-acetyl-alpha-D-galactosaminyl]-L-seryl-[protein] + UDP-N-acetyl-alpha-D-glucosamine = 3-O-[N-acetyl-beta-D-glucosaminyl-(1-&gt;3)-[N-acetyl-beta-D-glucosaminyl-(1-&gt;6)]-N-acetyl-alpha-D-galactosaminyl]-L-seryl-[protein] + UDP + H(+)</text>
        <dbReference type="Rhea" id="RHEA:56188"/>
        <dbReference type="Rhea" id="RHEA-COMP:11691"/>
        <dbReference type="Rhea" id="RHEA-COMP:14412"/>
        <dbReference type="ChEBI" id="CHEBI:15378"/>
        <dbReference type="ChEBI" id="CHEBI:57705"/>
        <dbReference type="ChEBI" id="CHEBI:58223"/>
        <dbReference type="ChEBI" id="CHEBI:87079"/>
        <dbReference type="ChEBI" id="CHEBI:139581"/>
        <dbReference type="EC" id="2.4.1.148"/>
    </reaction>
</comment>
<comment type="catalytic activity">
    <reaction evidence="2">
        <text>a 3-O-[N-acetyl-beta-D-glucosaminyl-(1-&gt;3)-N-acetyl-alpha-D-galactosaminyl]-L-threonyl-[protein] + UDP-N-acetyl-alpha-D-glucosamine = 3-O-[N-acetyl-beta-D-glucosaminyl-(1-&gt;3)-[N-acetyl-beta-D-glucosaminyl-(1-&gt;6)]-N-acetyl-alpha-D-galactosaminyl]-L-threonyl-[protein] + UDP + H(+)</text>
        <dbReference type="Rhea" id="RHEA:56192"/>
        <dbReference type="Rhea" id="RHEA-COMP:11692"/>
        <dbReference type="Rhea" id="RHEA-COMP:14413"/>
        <dbReference type="ChEBI" id="CHEBI:15378"/>
        <dbReference type="ChEBI" id="CHEBI:57705"/>
        <dbReference type="ChEBI" id="CHEBI:58223"/>
        <dbReference type="ChEBI" id="CHEBI:87080"/>
        <dbReference type="ChEBI" id="CHEBI:139580"/>
        <dbReference type="EC" id="2.4.1.148"/>
    </reaction>
</comment>
<comment type="pathway">
    <text>Protein modification; protein glycosylation.</text>
</comment>
<comment type="subcellular location">
    <subcellularLocation>
        <location evidence="1">Golgi apparatus membrane</location>
        <topology evidence="1">Single-pass type II membrane protein</topology>
    </subcellularLocation>
</comment>
<comment type="PTM">
    <text evidence="1">N-glycosylated.</text>
</comment>
<comment type="similarity">
    <text evidence="4">Belongs to the glycosyltransferase 14 family.</text>
</comment>
<proteinExistence type="inferred from homology"/>
<evidence type="ECO:0000250" key="1"/>
<evidence type="ECO:0000250" key="2">
    <source>
        <dbReference type="UniProtKB" id="O95395"/>
    </source>
</evidence>
<evidence type="ECO:0000255" key="3"/>
<evidence type="ECO:0000305" key="4"/>
<keyword id="KW-1015">Disulfide bond</keyword>
<keyword id="KW-0325">Glycoprotein</keyword>
<keyword id="KW-0328">Glycosyltransferase</keyword>
<keyword id="KW-0333">Golgi apparatus</keyword>
<keyword id="KW-0472">Membrane</keyword>
<keyword id="KW-1185">Reference proteome</keyword>
<keyword id="KW-0735">Signal-anchor</keyword>
<keyword id="KW-0808">Transferase</keyword>
<keyword id="KW-0812">Transmembrane</keyword>
<keyword id="KW-1133">Transmembrane helix</keyword>
<name>GCNT3_BOSMU</name>
<gene>
    <name type="primary">GCNT3</name>
</gene>
<sequence length="440" mass="50909">MKMTGWKKKLCRGHHLWALGCYSLLAVVALRLSLRLKCDVDSLDLESRDFQSQRCRDVLYKNLKLPAKRSINCSGITRGDQEAVVQALLDNLEVKKKRLPFTDTYYLNITRDCEQFKAQRKFIQFPLSKEELDFPIAYSMVVHEKIENFERLLRAVYAPQNIYCVHVDVKSPETFKEAVKAIISCFPNVFMASKLVPVVYASWSRVQADLNCMEDLLQSSVPWKYLLNTCGTDFPIKTNAEMVLALKMLNGKNSMESEIPSEYKKNRWKYRYEVTDRLYLTSKMKDPPPDNLPMFTGNAYFVASRAFVQHVLENPKSQRLIEWVKDTYSPDEHLWATLQRAPWMPGSVPYHPKYHISDMTAIARLVKWQGHEGDVSMGAPYAPCSGIHQRAICIYGAGDLHWILQNHHLLANKFDPRVDDNVLQCLEEYLRHKAIYGTEL</sequence>
<reference key="1">
    <citation type="journal article" date="2003" name="J. Virol.">
        <title>The core 2 beta-1,6-N-acetylglucosaminyltransferase-mucin encoded by bovine herpesvirus 4 was acquired from an ancestor of the African buffalo.</title>
        <authorList>
            <person name="Markine-Goriaynoff N."/>
            <person name="Georgin J.-P."/>
            <person name="Goltz M."/>
            <person name="Zimmermann W."/>
            <person name="Broll H."/>
            <person name="Wamwayi H.M."/>
            <person name="Pastoret P.-P."/>
            <person name="Sharp P.M."/>
            <person name="Vanderplasschen A."/>
        </authorList>
    </citation>
    <scope>NUCLEOTIDE SEQUENCE [GENOMIC DNA]</scope>
</reference>